<evidence type="ECO:0000250" key="1">
    <source>
        <dbReference type="UniProtKB" id="P07148"/>
    </source>
</evidence>
<evidence type="ECO:0000255" key="2"/>
<evidence type="ECO:0000269" key="3">
    <source>
    </source>
</evidence>
<evidence type="ECO:0000269" key="4">
    <source>
    </source>
</evidence>
<evidence type="ECO:0000269" key="5">
    <source>
    </source>
</evidence>
<evidence type="ECO:0000303" key="6">
    <source>
    </source>
</evidence>
<evidence type="ECO:0000305" key="7"/>
<evidence type="ECO:0000312" key="8">
    <source>
        <dbReference type="EMBL" id="AAH95259.1"/>
    </source>
</evidence>
<evidence type="ECO:0000312" key="9">
    <source>
        <dbReference type="EMBL" id="AAZ08576.1"/>
    </source>
</evidence>
<evidence type="ECO:0000312" key="10">
    <source>
        <dbReference type="ZFIN" id="ZDB-GENE-050522-96"/>
    </source>
</evidence>
<accession>Q4VBT1</accession>
<accession>Q1AMT2</accession>
<proteinExistence type="evidence at transcript level"/>
<name>FA1B1_DANRE</name>
<sequence length="128" mass="14115">MSFTGKYQLESQEGFVEFMKAVGLPDDMIEKGKDIKSVSEIEENGNQFKVTVTTGSKVLTNSFTIGQEADIETLTGERVKTIVNREGNKLKVVLNRITSITELVDANTLVNTLTLGGLVYKRISKRVA</sequence>
<gene>
    <name type="primary">fabp1b.1</name>
    <name evidence="9 10" type="synonym">fabp1b</name>
    <name type="ORF">zgc:110431</name>
</gene>
<comment type="function">
    <text evidence="1">Binds free fatty acids and their coenzyme A derivatives, bilirubin, and some other small molecules in the cytoplasm. May be involved in intracellular lipid transport (By similarity).</text>
</comment>
<comment type="subcellular location">
    <subcellularLocation>
        <location evidence="1">Cytoplasm</location>
    </subcellularLocation>
</comment>
<comment type="tissue specificity">
    <text evidence="3 5">Expressed in the yolk syncytial layer (YSL) and subsequently in the intestinal bulb in developing embryos and larvae. In adults, expressed in the intestine.</text>
</comment>
<comment type="induction">
    <text evidence="4">By a linolenic acid-rich diet.</text>
</comment>
<comment type="domain">
    <text evidence="1">Forms a beta-barrel structure that accommodates hydrophobic ligands in its interior.</text>
</comment>
<comment type="miscellaneous">
    <text evidence="7">The zebrafish genome contains duplicated fabp1b genes (fabp1b.1 and fabp1b.2) which probably arose from a tandem gene duplication event.</text>
</comment>
<comment type="similarity">
    <text evidence="2">Belongs to the calycin superfamily. Fatty-acid binding protein (FABP) family.</text>
</comment>
<comment type="caution">
    <text evidence="7">PubMed:16857010 reports that adult expression is restricted to the intestine and absent from the liver, whereas PubMed:19953126 detects expression in the liver, intestine, heart, testis, ovary, and gills.</text>
</comment>
<organism>
    <name type="scientific">Danio rerio</name>
    <name type="common">Zebrafish</name>
    <name type="synonym">Brachydanio rerio</name>
    <dbReference type="NCBI Taxonomy" id="7955"/>
    <lineage>
        <taxon>Eukaryota</taxon>
        <taxon>Metazoa</taxon>
        <taxon>Chordata</taxon>
        <taxon>Craniata</taxon>
        <taxon>Vertebrata</taxon>
        <taxon>Euteleostomi</taxon>
        <taxon>Actinopterygii</taxon>
        <taxon>Neopterygii</taxon>
        <taxon>Teleostei</taxon>
        <taxon>Ostariophysi</taxon>
        <taxon>Cypriniformes</taxon>
        <taxon>Danionidae</taxon>
        <taxon>Danioninae</taxon>
        <taxon>Danio</taxon>
    </lineage>
</organism>
<feature type="chain" id="PRO_0000397923" description="Fatty acid binding protein 1-B.1">
    <location>
        <begin position="1"/>
        <end position="128"/>
    </location>
</feature>
<feature type="sequence conflict" description="In Ref. 1; AAZ08576/ABF18598." evidence="7" ref="1">
    <original>V</original>
    <variation>E</variation>
    <location>
        <position position="16"/>
    </location>
</feature>
<feature type="sequence conflict" description="In Ref. 1; AAZ08576/ABF18598." evidence="7" ref="1">
    <original>R</original>
    <variation>K</variation>
    <location>
        <position position="78"/>
    </location>
</feature>
<feature type="sequence conflict" description="In Ref. 1; AAZ08576/ABF18598." evidence="7" ref="1">
    <original>I</original>
    <variation>T</variation>
    <location>
        <position position="82"/>
    </location>
</feature>
<feature type="sequence conflict" description="In Ref. 1; AAZ08576/ABF18598." evidence="7" ref="1">
    <original>A</original>
    <variation>T</variation>
    <location>
        <position position="106"/>
    </location>
</feature>
<protein>
    <recommendedName>
        <fullName>Fatty acid binding protein 1-B.1</fullName>
    </recommendedName>
    <alternativeName>
        <fullName evidence="6">Fatty acid binding protein 1b</fullName>
        <shortName evidence="6">Zf-FABP1b</shortName>
    </alternativeName>
</protein>
<keyword id="KW-0963">Cytoplasm</keyword>
<keyword id="KW-0446">Lipid-binding</keyword>
<keyword id="KW-1185">Reference proteome</keyword>
<keyword id="KW-0813">Transport</keyword>
<dbReference type="EMBL" id="DQ062096">
    <property type="protein sequence ID" value="AAZ08576.1"/>
    <property type="molecule type" value="mRNA"/>
</dbReference>
<dbReference type="EMBL" id="DQ474062">
    <property type="protein sequence ID" value="ABF18598.1"/>
    <property type="molecule type" value="mRNA"/>
</dbReference>
<dbReference type="EMBL" id="BC095259">
    <property type="protein sequence ID" value="AAH95259.1"/>
    <property type="molecule type" value="mRNA"/>
</dbReference>
<dbReference type="RefSeq" id="NP_001019822.1">
    <property type="nucleotide sequence ID" value="NM_001024651.2"/>
</dbReference>
<dbReference type="SMR" id="Q4VBT1"/>
<dbReference type="FunCoup" id="Q4VBT1">
    <property type="interactions" value="86"/>
</dbReference>
<dbReference type="STRING" id="7955.ENSDARP00000124794"/>
<dbReference type="PaxDb" id="7955-ENSDARP00000124794"/>
<dbReference type="Ensembl" id="ENSDART00000149528">
    <property type="protein sequence ID" value="ENSDARP00000124794"/>
    <property type="gene ID" value="ENSDARG00000059227"/>
</dbReference>
<dbReference type="GeneID" id="554095"/>
<dbReference type="KEGG" id="dre:554095"/>
<dbReference type="AGR" id="ZFIN:ZDB-GENE-050522-96"/>
<dbReference type="CTD" id="554095"/>
<dbReference type="ZFIN" id="ZDB-GENE-050522-96">
    <property type="gene designation" value="fabp1b.1"/>
</dbReference>
<dbReference type="eggNOG" id="KOG4015">
    <property type="taxonomic scope" value="Eukaryota"/>
</dbReference>
<dbReference type="HOGENOM" id="CLU_113772_4_2_1"/>
<dbReference type="InParanoid" id="Q4VBT1"/>
<dbReference type="OMA" id="GKYQVQT"/>
<dbReference type="OrthoDB" id="9971011at2759"/>
<dbReference type="PhylomeDB" id="Q4VBT1"/>
<dbReference type="Reactome" id="R-DRE-163560">
    <property type="pathway name" value="Triglyceride catabolism"/>
</dbReference>
<dbReference type="Reactome" id="R-DRE-189483">
    <property type="pathway name" value="Heme degradation"/>
</dbReference>
<dbReference type="Reactome" id="R-DRE-400206">
    <property type="pathway name" value="Regulation of lipid metabolism by PPARalpha"/>
</dbReference>
<dbReference type="Reactome" id="R-DRE-9707564">
    <property type="pathway name" value="Cytoprotection by HMOX1"/>
</dbReference>
<dbReference type="PRO" id="PR:Q4VBT1"/>
<dbReference type="Proteomes" id="UP000000437">
    <property type="component" value="Chromosome 8"/>
</dbReference>
<dbReference type="Bgee" id="ENSDARG00000059227">
    <property type="expression patterns" value="Expressed in intestine and 16 other cell types or tissues"/>
</dbReference>
<dbReference type="ExpressionAtlas" id="Q4VBT1">
    <property type="expression patterns" value="baseline and differential"/>
</dbReference>
<dbReference type="GO" id="GO:0005829">
    <property type="term" value="C:cytosol"/>
    <property type="evidence" value="ECO:0000318"/>
    <property type="project" value="GO_Central"/>
</dbReference>
<dbReference type="GO" id="GO:0005634">
    <property type="term" value="C:nucleus"/>
    <property type="evidence" value="ECO:0000318"/>
    <property type="project" value="GO_Central"/>
</dbReference>
<dbReference type="GO" id="GO:0005504">
    <property type="term" value="F:fatty acid binding"/>
    <property type="evidence" value="ECO:0000250"/>
    <property type="project" value="ZFIN"/>
</dbReference>
<dbReference type="GO" id="GO:0015908">
    <property type="term" value="P:fatty acid transport"/>
    <property type="evidence" value="ECO:0000318"/>
    <property type="project" value="GO_Central"/>
</dbReference>
<dbReference type="GO" id="GO:0033993">
    <property type="term" value="P:response to lipid"/>
    <property type="evidence" value="ECO:0000314"/>
    <property type="project" value="ZFIN"/>
</dbReference>
<dbReference type="CDD" id="cd19444">
    <property type="entry name" value="FABP1"/>
    <property type="match status" value="1"/>
</dbReference>
<dbReference type="FunFam" id="2.40.128.20:FF:000006">
    <property type="entry name" value="Fatty acid-binding protein, liver"/>
    <property type="match status" value="1"/>
</dbReference>
<dbReference type="Gene3D" id="2.40.128.20">
    <property type="match status" value="1"/>
</dbReference>
<dbReference type="InterPro" id="IPR012674">
    <property type="entry name" value="Calycin"/>
</dbReference>
<dbReference type="InterPro" id="IPR000463">
    <property type="entry name" value="Fatty_acid-bd"/>
</dbReference>
<dbReference type="InterPro" id="IPR031259">
    <property type="entry name" value="ILBP"/>
</dbReference>
<dbReference type="PANTHER" id="PTHR11955">
    <property type="entry name" value="FATTY ACID BINDING PROTEIN"/>
    <property type="match status" value="1"/>
</dbReference>
<dbReference type="Pfam" id="PF14651">
    <property type="entry name" value="Lipocalin_7"/>
    <property type="match status" value="1"/>
</dbReference>
<dbReference type="PRINTS" id="PR00178">
    <property type="entry name" value="FATTYACIDBP"/>
</dbReference>
<dbReference type="SUPFAM" id="SSF50814">
    <property type="entry name" value="Lipocalins"/>
    <property type="match status" value="1"/>
</dbReference>
<reference evidence="7 9" key="1">
    <citation type="journal article" date="2006" name="FEBS J.">
        <title>Hierarchical subfunctionalization of fabp1a, fabp1b and fabp10 tissue-specific expression may account for retention of these duplicated genes in the zebrafish (Danio rerio) genome.</title>
        <authorList>
            <person name="Sharma M.K."/>
            <person name="Liu R.Z."/>
            <person name="Thisse C."/>
            <person name="Thisse B."/>
            <person name="Denovan-Wright E.M."/>
            <person name="Wright J.M."/>
        </authorList>
    </citation>
    <scope>NUCLEOTIDE SEQUENCE [MRNA]</scope>
    <scope>TISSUE SPECIFICITY</scope>
</reference>
<reference evidence="8" key="2">
    <citation type="submission" date="2005-05" db="EMBL/GenBank/DDBJ databases">
        <authorList>
            <consortium name="NIH - Zebrafish Gene Collection (ZGC) project"/>
        </authorList>
    </citation>
    <scope>NUCLEOTIDE SEQUENCE [LARGE SCALE MRNA]</scope>
    <source>
        <tissue evidence="8">Embryo</tissue>
    </source>
</reference>
<reference evidence="7" key="3">
    <citation type="journal article" date="2009" name="BMC Evol. Biol.">
        <title>Differential transcriptional modulation of duplicated fatty acid-binding protein genes by dietary fatty acids in zebrafish (Danio rerio): evidence for subfunctionalization or neofunctionalization of duplicated genes.</title>
        <authorList>
            <person name="Karanth S."/>
            <person name="Lall S.P."/>
            <person name="Denovan-Wright E.M."/>
            <person name="Wright J.M."/>
        </authorList>
    </citation>
    <scope>INDUCTION</scope>
</reference>
<reference evidence="7" key="4">
    <citation type="journal article" date="2009" name="Genome">
        <title>Tandem duplication of the fabp1b gene and subsequent divergence of the tissue-specific distribution of fabp1b.1 and fabp1b.2 transcripts in zebrafish (Danio rerio).</title>
        <authorList>
            <person name="Karanth S."/>
            <person name="Denovan-Wright E.M."/>
            <person name="Thisse C."/>
            <person name="Thisse B."/>
            <person name="Wright J.M."/>
        </authorList>
    </citation>
    <scope>TISSUE SPECIFICITY</scope>
</reference>